<keyword id="KW-0028">Amino-acid biosynthesis</keyword>
<keyword id="KW-0057">Aromatic amino acid biosynthesis</keyword>
<keyword id="KW-0521">NADP</keyword>
<keyword id="KW-0560">Oxidoreductase</keyword>
<keyword id="KW-1185">Reference proteome</keyword>
<sequence>MLYLGVIGYPIKHSVSPAMHNAALQHEGIEGIYLAFEVKPDRLRDAVFGAKALGFRGLNVTIPFKESVVEFVELEGEAAKIKTVNTIDLVEMVGYNTDVYGVKAALSGTELGGKTALVVGAGGAGKAAALALLDMGSTVIVANRTEEKGREAVEMLRRYGECIFWPLSRVEELKGKVDVVVNATPLGMRGFKAEIPVPPSMLDGVELVFDTVYNPMETPLIREAKKRGCKVVYGIEMLVHQGAKAFEIWTGIEPDVGVMREAALRALRF</sequence>
<protein>
    <recommendedName>
        <fullName evidence="1">Shikimate dehydrogenase (NADP(+))</fullName>
        <shortName evidence="1">SDH</shortName>
        <ecNumber evidence="1">1.1.1.25</ecNumber>
    </recommendedName>
</protein>
<comment type="function">
    <text evidence="1">Involved in the biosynthesis of the chorismate, which leads to the biosynthesis of aromatic amino acids. Catalyzes the reversible NADPH linked reduction of 3-dehydroshikimate (DHSA) to yield shikimate (SA).</text>
</comment>
<comment type="catalytic activity">
    <reaction evidence="1">
        <text>shikimate + NADP(+) = 3-dehydroshikimate + NADPH + H(+)</text>
        <dbReference type="Rhea" id="RHEA:17737"/>
        <dbReference type="ChEBI" id="CHEBI:15378"/>
        <dbReference type="ChEBI" id="CHEBI:16630"/>
        <dbReference type="ChEBI" id="CHEBI:36208"/>
        <dbReference type="ChEBI" id="CHEBI:57783"/>
        <dbReference type="ChEBI" id="CHEBI:58349"/>
        <dbReference type="EC" id="1.1.1.25"/>
    </reaction>
</comment>
<comment type="pathway">
    <text evidence="1">Metabolic intermediate biosynthesis; chorismate biosynthesis; chorismate from D-erythrose 4-phosphate and phosphoenolpyruvate: step 4/7.</text>
</comment>
<comment type="subunit">
    <text evidence="1">Homodimer.</text>
</comment>
<comment type="similarity">
    <text evidence="1">Belongs to the shikimate dehydrogenase family.</text>
</comment>
<dbReference type="EC" id="1.1.1.25" evidence="1"/>
<dbReference type="EMBL" id="AE000782">
    <property type="protein sequence ID" value="AAB88930.1"/>
    <property type="molecule type" value="Genomic_DNA"/>
</dbReference>
<dbReference type="PIR" id="G69540">
    <property type="entry name" value="G69540"/>
</dbReference>
<dbReference type="RefSeq" id="WP_010879816.1">
    <property type="nucleotide sequence ID" value="NC_000917.1"/>
</dbReference>
<dbReference type="SMR" id="O27957"/>
<dbReference type="STRING" id="224325.AF_2327"/>
<dbReference type="PaxDb" id="224325-AF_2327"/>
<dbReference type="EnsemblBacteria" id="AAB88930">
    <property type="protein sequence ID" value="AAB88930"/>
    <property type="gene ID" value="AF_2327"/>
</dbReference>
<dbReference type="GeneID" id="1485559"/>
<dbReference type="KEGG" id="afu:AF_2327"/>
<dbReference type="eggNOG" id="arCOG01033">
    <property type="taxonomic scope" value="Archaea"/>
</dbReference>
<dbReference type="HOGENOM" id="CLU_044063_4_1_2"/>
<dbReference type="OrthoDB" id="8744at2157"/>
<dbReference type="PhylomeDB" id="O27957"/>
<dbReference type="BRENDA" id="1.1.1.25">
    <property type="organism ID" value="414"/>
</dbReference>
<dbReference type="UniPathway" id="UPA00053">
    <property type="reaction ID" value="UER00087"/>
</dbReference>
<dbReference type="Proteomes" id="UP000002199">
    <property type="component" value="Chromosome"/>
</dbReference>
<dbReference type="GO" id="GO:0050661">
    <property type="term" value="F:NADP binding"/>
    <property type="evidence" value="ECO:0007669"/>
    <property type="project" value="InterPro"/>
</dbReference>
<dbReference type="GO" id="GO:0004764">
    <property type="term" value="F:shikimate 3-dehydrogenase (NADP+) activity"/>
    <property type="evidence" value="ECO:0007669"/>
    <property type="project" value="UniProtKB-UniRule"/>
</dbReference>
<dbReference type="GO" id="GO:0008652">
    <property type="term" value="P:amino acid biosynthetic process"/>
    <property type="evidence" value="ECO:0007669"/>
    <property type="project" value="UniProtKB-KW"/>
</dbReference>
<dbReference type="GO" id="GO:0009073">
    <property type="term" value="P:aromatic amino acid family biosynthetic process"/>
    <property type="evidence" value="ECO:0007669"/>
    <property type="project" value="UniProtKB-KW"/>
</dbReference>
<dbReference type="GO" id="GO:0009423">
    <property type="term" value="P:chorismate biosynthetic process"/>
    <property type="evidence" value="ECO:0007669"/>
    <property type="project" value="UniProtKB-UniRule"/>
</dbReference>
<dbReference type="GO" id="GO:0019632">
    <property type="term" value="P:shikimate metabolic process"/>
    <property type="evidence" value="ECO:0007669"/>
    <property type="project" value="InterPro"/>
</dbReference>
<dbReference type="CDD" id="cd01065">
    <property type="entry name" value="NAD_bind_Shikimate_DH"/>
    <property type="match status" value="1"/>
</dbReference>
<dbReference type="Gene3D" id="3.40.50.10860">
    <property type="entry name" value="Leucine Dehydrogenase, chain A, domain 1"/>
    <property type="match status" value="1"/>
</dbReference>
<dbReference type="Gene3D" id="3.40.50.720">
    <property type="entry name" value="NAD(P)-binding Rossmann-like Domain"/>
    <property type="match status" value="1"/>
</dbReference>
<dbReference type="HAMAP" id="MF_00222">
    <property type="entry name" value="Shikimate_DH_AroE"/>
    <property type="match status" value="1"/>
</dbReference>
<dbReference type="InterPro" id="IPR046346">
    <property type="entry name" value="Aminoacid_DH-like_N_sf"/>
</dbReference>
<dbReference type="InterPro" id="IPR036291">
    <property type="entry name" value="NAD(P)-bd_dom_sf"/>
</dbReference>
<dbReference type="InterPro" id="IPR041121">
    <property type="entry name" value="SDH_C"/>
</dbReference>
<dbReference type="InterPro" id="IPR011342">
    <property type="entry name" value="Shikimate_DH"/>
</dbReference>
<dbReference type="InterPro" id="IPR013708">
    <property type="entry name" value="Shikimate_DH-bd_N"/>
</dbReference>
<dbReference type="InterPro" id="IPR022893">
    <property type="entry name" value="Shikimate_DH_fam"/>
</dbReference>
<dbReference type="InterPro" id="IPR006151">
    <property type="entry name" value="Shikm_DH/Glu-tRNA_Rdtase"/>
</dbReference>
<dbReference type="NCBIfam" id="TIGR00507">
    <property type="entry name" value="aroE"/>
    <property type="match status" value="1"/>
</dbReference>
<dbReference type="NCBIfam" id="NF001319">
    <property type="entry name" value="PRK00258.3-3"/>
    <property type="match status" value="1"/>
</dbReference>
<dbReference type="PANTHER" id="PTHR21089:SF1">
    <property type="entry name" value="BIFUNCTIONAL 3-DEHYDROQUINATE DEHYDRATASE_SHIKIMATE DEHYDROGENASE, CHLOROPLASTIC"/>
    <property type="match status" value="1"/>
</dbReference>
<dbReference type="PANTHER" id="PTHR21089">
    <property type="entry name" value="SHIKIMATE DEHYDROGENASE"/>
    <property type="match status" value="1"/>
</dbReference>
<dbReference type="Pfam" id="PF18317">
    <property type="entry name" value="SDH_C"/>
    <property type="match status" value="1"/>
</dbReference>
<dbReference type="Pfam" id="PF01488">
    <property type="entry name" value="Shikimate_DH"/>
    <property type="match status" value="1"/>
</dbReference>
<dbReference type="Pfam" id="PF08501">
    <property type="entry name" value="Shikimate_dh_N"/>
    <property type="match status" value="1"/>
</dbReference>
<dbReference type="SUPFAM" id="SSF53223">
    <property type="entry name" value="Aminoacid dehydrogenase-like, N-terminal domain"/>
    <property type="match status" value="1"/>
</dbReference>
<dbReference type="SUPFAM" id="SSF51735">
    <property type="entry name" value="NAD(P)-binding Rossmann-fold domains"/>
    <property type="match status" value="1"/>
</dbReference>
<reference key="1">
    <citation type="journal article" date="1997" name="Nature">
        <title>The complete genome sequence of the hyperthermophilic, sulphate-reducing archaeon Archaeoglobus fulgidus.</title>
        <authorList>
            <person name="Klenk H.-P."/>
            <person name="Clayton R.A."/>
            <person name="Tomb J.-F."/>
            <person name="White O."/>
            <person name="Nelson K.E."/>
            <person name="Ketchum K.A."/>
            <person name="Dodson R.J."/>
            <person name="Gwinn M.L."/>
            <person name="Hickey E.K."/>
            <person name="Peterson J.D."/>
            <person name="Richardson D.L."/>
            <person name="Kerlavage A.R."/>
            <person name="Graham D.E."/>
            <person name="Kyrpides N.C."/>
            <person name="Fleischmann R.D."/>
            <person name="Quackenbush J."/>
            <person name="Lee N.H."/>
            <person name="Sutton G.G."/>
            <person name="Gill S.R."/>
            <person name="Kirkness E.F."/>
            <person name="Dougherty B.A."/>
            <person name="McKenney K."/>
            <person name="Adams M.D."/>
            <person name="Loftus B.J."/>
            <person name="Peterson S.N."/>
            <person name="Reich C.I."/>
            <person name="McNeil L.K."/>
            <person name="Badger J.H."/>
            <person name="Glodek A."/>
            <person name="Zhou L."/>
            <person name="Overbeek R."/>
            <person name="Gocayne J.D."/>
            <person name="Weidman J.F."/>
            <person name="McDonald L.A."/>
            <person name="Utterback T.R."/>
            <person name="Cotton M.D."/>
            <person name="Spriggs T."/>
            <person name="Artiach P."/>
            <person name="Kaine B.P."/>
            <person name="Sykes S.M."/>
            <person name="Sadow P.W."/>
            <person name="D'Andrea K.P."/>
            <person name="Bowman C."/>
            <person name="Fujii C."/>
            <person name="Garland S.A."/>
            <person name="Mason T.M."/>
            <person name="Olsen G.J."/>
            <person name="Fraser C.M."/>
            <person name="Smith H.O."/>
            <person name="Woese C.R."/>
            <person name="Venter J.C."/>
        </authorList>
    </citation>
    <scope>NUCLEOTIDE SEQUENCE [LARGE SCALE GENOMIC DNA]</scope>
    <source>
        <strain>ATCC 49558 / DSM 4304 / JCM 9628 / NBRC 100126 / VC-16</strain>
    </source>
</reference>
<feature type="chain" id="PRO_0000136057" description="Shikimate dehydrogenase (NADP(+))">
    <location>
        <begin position="1"/>
        <end position="269"/>
    </location>
</feature>
<feature type="active site" description="Proton acceptor" evidence="1">
    <location>
        <position position="65"/>
    </location>
</feature>
<feature type="binding site" evidence="1">
    <location>
        <begin position="14"/>
        <end position="16"/>
    </location>
    <ligand>
        <name>shikimate</name>
        <dbReference type="ChEBI" id="CHEBI:36208"/>
    </ligand>
</feature>
<feature type="binding site" evidence="1">
    <location>
        <position position="61"/>
    </location>
    <ligand>
        <name>shikimate</name>
        <dbReference type="ChEBI" id="CHEBI:36208"/>
    </ligand>
</feature>
<feature type="binding site" evidence="1">
    <location>
        <position position="85"/>
    </location>
    <ligand>
        <name>shikimate</name>
        <dbReference type="ChEBI" id="CHEBI:36208"/>
    </ligand>
</feature>
<feature type="binding site" evidence="1">
    <location>
        <position position="98"/>
    </location>
    <ligand>
        <name>shikimate</name>
        <dbReference type="ChEBI" id="CHEBI:36208"/>
    </ligand>
</feature>
<feature type="binding site" evidence="1">
    <location>
        <begin position="120"/>
        <end position="124"/>
    </location>
    <ligand>
        <name>NADP(+)</name>
        <dbReference type="ChEBI" id="CHEBI:58349"/>
    </ligand>
</feature>
<feature type="binding site" evidence="1">
    <location>
        <begin position="143"/>
        <end position="148"/>
    </location>
    <ligand>
        <name>NADP(+)</name>
        <dbReference type="ChEBI" id="CHEBI:58349"/>
    </ligand>
</feature>
<feature type="binding site" evidence="1">
    <location>
        <position position="211"/>
    </location>
    <ligand>
        <name>NADP(+)</name>
        <dbReference type="ChEBI" id="CHEBI:58349"/>
    </ligand>
</feature>
<feature type="binding site" evidence="1">
    <location>
        <position position="213"/>
    </location>
    <ligand>
        <name>shikimate</name>
        <dbReference type="ChEBI" id="CHEBI:36208"/>
    </ligand>
</feature>
<feature type="binding site" evidence="1">
    <location>
        <position position="234"/>
    </location>
    <ligand>
        <name>NADP(+)</name>
        <dbReference type="ChEBI" id="CHEBI:58349"/>
    </ligand>
</feature>
<proteinExistence type="inferred from homology"/>
<organism>
    <name type="scientific">Archaeoglobus fulgidus (strain ATCC 49558 / DSM 4304 / JCM 9628 / NBRC 100126 / VC-16)</name>
    <dbReference type="NCBI Taxonomy" id="224325"/>
    <lineage>
        <taxon>Archaea</taxon>
        <taxon>Methanobacteriati</taxon>
        <taxon>Methanobacteriota</taxon>
        <taxon>Archaeoglobi</taxon>
        <taxon>Archaeoglobales</taxon>
        <taxon>Archaeoglobaceae</taxon>
        <taxon>Archaeoglobus</taxon>
    </lineage>
</organism>
<name>AROE_ARCFU</name>
<evidence type="ECO:0000255" key="1">
    <source>
        <dbReference type="HAMAP-Rule" id="MF_00222"/>
    </source>
</evidence>
<gene>
    <name evidence="1" type="primary">aroE</name>
    <name type="ordered locus">AF_2327</name>
</gene>
<accession>O27957</accession>